<accession>Q4V872</accession>
<feature type="chain" id="PRO_0000345413" description="Coiled-coil domain-containing protein 85C">
    <location>
        <begin position="1"/>
        <end position="390"/>
    </location>
</feature>
<feature type="region of interest" description="Disordered" evidence="4">
    <location>
        <begin position="153"/>
        <end position="237"/>
    </location>
</feature>
<feature type="coiled-coil region" evidence="3">
    <location>
        <begin position="26"/>
        <end position="86"/>
    </location>
</feature>
<feature type="coiled-coil region" evidence="3">
    <location>
        <begin position="116"/>
        <end position="146"/>
    </location>
</feature>
<feature type="compositionally biased region" description="Polar residues" evidence="4">
    <location>
        <begin position="157"/>
        <end position="172"/>
    </location>
</feature>
<feature type="compositionally biased region" description="Low complexity" evidence="4">
    <location>
        <begin position="182"/>
        <end position="194"/>
    </location>
</feature>
<organism>
    <name type="scientific">Xenopus laevis</name>
    <name type="common">African clawed frog</name>
    <dbReference type="NCBI Taxonomy" id="8355"/>
    <lineage>
        <taxon>Eukaryota</taxon>
        <taxon>Metazoa</taxon>
        <taxon>Chordata</taxon>
        <taxon>Craniata</taxon>
        <taxon>Vertebrata</taxon>
        <taxon>Euteleostomi</taxon>
        <taxon>Amphibia</taxon>
        <taxon>Batrachia</taxon>
        <taxon>Anura</taxon>
        <taxon>Pipoidea</taxon>
        <taxon>Pipidae</taxon>
        <taxon>Xenopodinae</taxon>
        <taxon>Xenopus</taxon>
        <taxon>Xenopus</taxon>
    </lineage>
</organism>
<sequence>MAKHCQGAAAEDISAVSDEELLRWSKEELIKRLRKVDNEKMSLMLEHGNMMKDVNRRLQLHLHEIRGLKDVNQKLQDESQELRELCCFLDDDRQKGKKLSREWQRFGRHSATVVWKEVGTYQQKLKELEAKQESLVRDNLELKEIILMLDEERNGPGSRSSIDSQNSLTNLNGGSGPRDVGDGSSTSSTGSAGSPDHHHHHHHIKTTENKAGTIRKSTDDLSVPPHHRSIPNGLNDSSTTYIRQLETRVKLLEDDNKLLSQHSTSGELRTLRKGLSPYHSESQLSSLPQYQEPLQNGSARVAPEVSSTAPAGYIPVVQKPEAVVHAMKVLEVHENLDRQIPDTYEEDLSEKEKAIVREMCNVVWRKLGDAANSKPSIRQHLSGNQFKGPL</sequence>
<dbReference type="EMBL" id="BC097515">
    <property type="protein sequence ID" value="AAH97515.1"/>
    <property type="molecule type" value="mRNA"/>
</dbReference>
<dbReference type="RefSeq" id="NP_001089440.1">
    <property type="nucleotide sequence ID" value="NM_001095971.1"/>
</dbReference>
<dbReference type="SMR" id="Q4V872"/>
<dbReference type="DNASU" id="734490"/>
<dbReference type="GeneID" id="734490"/>
<dbReference type="KEGG" id="xla:734490"/>
<dbReference type="AGR" id="Xenbase:XB-GENE-5853473"/>
<dbReference type="CTD" id="734490"/>
<dbReference type="Xenbase" id="XB-GENE-5853473">
    <property type="gene designation" value="ccdc85c.S"/>
</dbReference>
<dbReference type="OrthoDB" id="10056395at2759"/>
<dbReference type="Proteomes" id="UP000186698">
    <property type="component" value="Chromosome 8S"/>
</dbReference>
<dbReference type="Bgee" id="734490">
    <property type="expression patterns" value="Expressed in camera-type eye and 17 other cell types or tissues"/>
</dbReference>
<dbReference type="GO" id="GO:0005912">
    <property type="term" value="C:adherens junction"/>
    <property type="evidence" value="ECO:0007669"/>
    <property type="project" value="UniProtKB-SubCell"/>
</dbReference>
<dbReference type="GO" id="GO:0043296">
    <property type="term" value="C:apical junction complex"/>
    <property type="evidence" value="ECO:0000318"/>
    <property type="project" value="GO_Central"/>
</dbReference>
<dbReference type="GO" id="GO:0005923">
    <property type="term" value="C:bicellular tight junction"/>
    <property type="evidence" value="ECO:0007669"/>
    <property type="project" value="UniProtKB-SubCell"/>
</dbReference>
<dbReference type="InterPro" id="IPR019359">
    <property type="entry name" value="CCDC85"/>
</dbReference>
<dbReference type="PANTHER" id="PTHR13546:SF14">
    <property type="entry name" value="COILED-COIL DOMAIN-CONTAINING PROTEIN 85C"/>
    <property type="match status" value="1"/>
</dbReference>
<dbReference type="PANTHER" id="PTHR13546">
    <property type="entry name" value="RE60986P"/>
    <property type="match status" value="1"/>
</dbReference>
<dbReference type="Pfam" id="PF10226">
    <property type="entry name" value="CCDC85"/>
    <property type="match status" value="1"/>
</dbReference>
<keyword id="KW-0965">Cell junction</keyword>
<keyword id="KW-0175">Coiled coil</keyword>
<keyword id="KW-0217">Developmental protein</keyword>
<keyword id="KW-1185">Reference proteome</keyword>
<keyword id="KW-0796">Tight junction</keyword>
<protein>
    <recommendedName>
        <fullName>Coiled-coil domain-containing protein 85C</fullName>
    </recommendedName>
</protein>
<comment type="function">
    <text evidence="1 2">May play a role in cell-cell adhesion and epithelium development (By similarity). May play an important role in cortical development, especially in the maintenance of radial glia (By similarity).</text>
</comment>
<comment type="subcellular location">
    <subcellularLocation>
        <location evidence="2">Cell junction</location>
        <location evidence="2">Tight junction</location>
    </subcellularLocation>
    <subcellularLocation>
        <location evidence="1">Cell junction</location>
        <location evidence="1">Adherens junction</location>
    </subcellularLocation>
</comment>
<comment type="similarity">
    <text evidence="5">Belongs to the CCDC85 family.</text>
</comment>
<name>CC85C_XENLA</name>
<evidence type="ECO:0000250" key="1">
    <source>
        <dbReference type="UniProtKB" id="A6NKD9"/>
    </source>
</evidence>
<evidence type="ECO:0000250" key="2">
    <source>
        <dbReference type="UniProtKB" id="E9Q6B2"/>
    </source>
</evidence>
<evidence type="ECO:0000255" key="3"/>
<evidence type="ECO:0000256" key="4">
    <source>
        <dbReference type="SAM" id="MobiDB-lite"/>
    </source>
</evidence>
<evidence type="ECO:0000305" key="5"/>
<gene>
    <name type="primary">ccdc85c</name>
</gene>
<reference key="1">
    <citation type="submission" date="2005-06" db="EMBL/GenBank/DDBJ databases">
        <authorList>
            <consortium name="NIH - Xenopus Gene Collection (XGC) project"/>
        </authorList>
    </citation>
    <scope>NUCLEOTIDE SEQUENCE [LARGE SCALE MRNA]</scope>
    <source>
        <tissue>Embryo</tissue>
    </source>
</reference>
<proteinExistence type="evidence at transcript level"/>